<accession>Q8NYX2</accession>
<organism>
    <name type="scientific">Staphylococcus aureus (strain MW2)</name>
    <dbReference type="NCBI Taxonomy" id="196620"/>
    <lineage>
        <taxon>Bacteria</taxon>
        <taxon>Bacillati</taxon>
        <taxon>Bacillota</taxon>
        <taxon>Bacilli</taxon>
        <taxon>Bacillales</taxon>
        <taxon>Staphylococcaceae</taxon>
        <taxon>Staphylococcus</taxon>
    </lineage>
</organism>
<feature type="chain" id="PRO_0000198182" description="Ribosomal RNA large subunit methyltransferase H">
    <location>
        <begin position="1"/>
        <end position="159"/>
    </location>
</feature>
<feature type="binding site" evidence="1">
    <location>
        <position position="76"/>
    </location>
    <ligand>
        <name>S-adenosyl-L-methionine</name>
        <dbReference type="ChEBI" id="CHEBI:59789"/>
    </ligand>
</feature>
<feature type="binding site" evidence="1">
    <location>
        <position position="108"/>
    </location>
    <ligand>
        <name>S-adenosyl-L-methionine</name>
        <dbReference type="ChEBI" id="CHEBI:59789"/>
    </ligand>
</feature>
<feature type="binding site" evidence="1">
    <location>
        <begin position="127"/>
        <end position="132"/>
    </location>
    <ligand>
        <name>S-adenosyl-L-methionine</name>
        <dbReference type="ChEBI" id="CHEBI:59789"/>
    </ligand>
</feature>
<sequence length="159" mass="18310">MKITILAVGKLKEKYWKQAIAEYEKRLGPYTKIDIIEVTDEKAPENMSDKEIEQVKEKEGQRILAKIKPQSTVITLEIQGKMLSSEGLAQELNQRMTQGQSDFVFVIGGSNGLHKDVLQRSNYALSFSKMTFPHQMMRVVLIEQVYRAFKIMRGEAYHK</sequence>
<reference key="1">
    <citation type="journal article" date="2002" name="Lancet">
        <title>Genome and virulence determinants of high virulence community-acquired MRSA.</title>
        <authorList>
            <person name="Baba T."/>
            <person name="Takeuchi F."/>
            <person name="Kuroda M."/>
            <person name="Yuzawa H."/>
            <person name="Aoki K."/>
            <person name="Oguchi A."/>
            <person name="Nagai Y."/>
            <person name="Iwama N."/>
            <person name="Asano K."/>
            <person name="Naimi T."/>
            <person name="Kuroda H."/>
            <person name="Cui L."/>
            <person name="Yamamoto K."/>
            <person name="Hiramatsu K."/>
        </authorList>
    </citation>
    <scope>NUCLEOTIDE SEQUENCE [LARGE SCALE GENOMIC DNA]</scope>
    <source>
        <strain>MW2</strain>
    </source>
</reference>
<evidence type="ECO:0000255" key="1">
    <source>
        <dbReference type="HAMAP-Rule" id="MF_00658"/>
    </source>
</evidence>
<protein>
    <recommendedName>
        <fullName evidence="1">Ribosomal RNA large subunit methyltransferase H</fullName>
        <ecNumber evidence="1">2.1.1.177</ecNumber>
    </recommendedName>
    <alternativeName>
        <fullName evidence="1">23S rRNA (pseudouridine1915-N3)-methyltransferase</fullName>
    </alternativeName>
    <alternativeName>
        <fullName evidence="1">23S rRNA m3Psi1915 methyltransferase</fullName>
    </alternativeName>
    <alternativeName>
        <fullName evidence="1">rRNA (pseudouridine-N3-)-methyltransferase RlmH</fullName>
    </alternativeName>
</protein>
<dbReference type="EC" id="2.1.1.177" evidence="1"/>
<dbReference type="EMBL" id="BA000033">
    <property type="protein sequence ID" value="BAB93889.1"/>
    <property type="molecule type" value="Genomic_DNA"/>
</dbReference>
<dbReference type="RefSeq" id="WP_000704777.1">
    <property type="nucleotide sequence ID" value="NC_003923.1"/>
</dbReference>
<dbReference type="SMR" id="Q8NYX2"/>
<dbReference type="KEGG" id="sam:MW0024"/>
<dbReference type="HOGENOM" id="CLU_100552_0_0_9"/>
<dbReference type="GO" id="GO:0005737">
    <property type="term" value="C:cytoplasm"/>
    <property type="evidence" value="ECO:0007669"/>
    <property type="project" value="UniProtKB-SubCell"/>
</dbReference>
<dbReference type="GO" id="GO:0070038">
    <property type="term" value="F:rRNA (pseudouridine-N3-)-methyltransferase activity"/>
    <property type="evidence" value="ECO:0007669"/>
    <property type="project" value="UniProtKB-UniRule"/>
</dbReference>
<dbReference type="CDD" id="cd18081">
    <property type="entry name" value="RlmH-like"/>
    <property type="match status" value="1"/>
</dbReference>
<dbReference type="Gene3D" id="3.40.1280.10">
    <property type="match status" value="1"/>
</dbReference>
<dbReference type="HAMAP" id="MF_00658">
    <property type="entry name" value="23SrRNA_methyltr_H"/>
    <property type="match status" value="1"/>
</dbReference>
<dbReference type="InterPro" id="IPR029028">
    <property type="entry name" value="Alpha/beta_knot_MTases"/>
</dbReference>
<dbReference type="InterPro" id="IPR003742">
    <property type="entry name" value="RlmH-like"/>
</dbReference>
<dbReference type="InterPro" id="IPR029026">
    <property type="entry name" value="tRNA_m1G_MTases_N"/>
</dbReference>
<dbReference type="NCBIfam" id="NF000985">
    <property type="entry name" value="PRK00103.1-3"/>
    <property type="match status" value="1"/>
</dbReference>
<dbReference type="NCBIfam" id="NF000986">
    <property type="entry name" value="PRK00103.1-4"/>
    <property type="match status" value="1"/>
</dbReference>
<dbReference type="NCBIfam" id="TIGR00246">
    <property type="entry name" value="tRNA_RlmH_YbeA"/>
    <property type="match status" value="1"/>
</dbReference>
<dbReference type="PANTHER" id="PTHR33603">
    <property type="entry name" value="METHYLTRANSFERASE"/>
    <property type="match status" value="1"/>
</dbReference>
<dbReference type="PANTHER" id="PTHR33603:SF1">
    <property type="entry name" value="RIBOSOMAL RNA LARGE SUBUNIT METHYLTRANSFERASE H"/>
    <property type="match status" value="1"/>
</dbReference>
<dbReference type="Pfam" id="PF02590">
    <property type="entry name" value="SPOUT_MTase"/>
    <property type="match status" value="1"/>
</dbReference>
<dbReference type="PIRSF" id="PIRSF004505">
    <property type="entry name" value="MT_bac"/>
    <property type="match status" value="1"/>
</dbReference>
<dbReference type="SUPFAM" id="SSF75217">
    <property type="entry name" value="alpha/beta knot"/>
    <property type="match status" value="1"/>
</dbReference>
<name>RLMH_STAAW</name>
<comment type="function">
    <text evidence="1">Specifically methylates the pseudouridine at position 1915 (m3Psi1915) in 23S rRNA.</text>
</comment>
<comment type="catalytic activity">
    <reaction evidence="1">
        <text>pseudouridine(1915) in 23S rRNA + S-adenosyl-L-methionine = N(3)-methylpseudouridine(1915) in 23S rRNA + S-adenosyl-L-homocysteine + H(+)</text>
        <dbReference type="Rhea" id="RHEA:42752"/>
        <dbReference type="Rhea" id="RHEA-COMP:10221"/>
        <dbReference type="Rhea" id="RHEA-COMP:10222"/>
        <dbReference type="ChEBI" id="CHEBI:15378"/>
        <dbReference type="ChEBI" id="CHEBI:57856"/>
        <dbReference type="ChEBI" id="CHEBI:59789"/>
        <dbReference type="ChEBI" id="CHEBI:65314"/>
        <dbReference type="ChEBI" id="CHEBI:74486"/>
        <dbReference type="EC" id="2.1.1.177"/>
    </reaction>
</comment>
<comment type="subunit">
    <text evidence="1">Homodimer.</text>
</comment>
<comment type="subcellular location">
    <subcellularLocation>
        <location evidence="1">Cytoplasm</location>
    </subcellularLocation>
</comment>
<comment type="similarity">
    <text evidence="1">Belongs to the RNA methyltransferase RlmH family.</text>
</comment>
<gene>
    <name evidence="1" type="primary">rlmH</name>
    <name type="ordered locus">MW0024</name>
</gene>
<proteinExistence type="inferred from homology"/>
<keyword id="KW-0963">Cytoplasm</keyword>
<keyword id="KW-0489">Methyltransferase</keyword>
<keyword id="KW-0698">rRNA processing</keyword>
<keyword id="KW-0949">S-adenosyl-L-methionine</keyword>
<keyword id="KW-0808">Transferase</keyword>